<gene>
    <name evidence="1" type="primary">engB</name>
    <name type="ordered locus">BT9727_4202</name>
</gene>
<name>ENGB_BACHK</name>
<accession>Q6HD57</accession>
<feature type="chain" id="PRO_0000266817" description="Probable GTP-binding protein EngB">
    <location>
        <begin position="1"/>
        <end position="198"/>
    </location>
</feature>
<feature type="domain" description="EngB-type G" evidence="1">
    <location>
        <begin position="22"/>
        <end position="195"/>
    </location>
</feature>
<feature type="binding site" evidence="1">
    <location>
        <begin position="30"/>
        <end position="37"/>
    </location>
    <ligand>
        <name>GTP</name>
        <dbReference type="ChEBI" id="CHEBI:37565"/>
    </ligand>
</feature>
<feature type="binding site" evidence="1">
    <location>
        <position position="37"/>
    </location>
    <ligand>
        <name>Mg(2+)</name>
        <dbReference type="ChEBI" id="CHEBI:18420"/>
    </ligand>
</feature>
<feature type="binding site" evidence="1">
    <location>
        <begin position="57"/>
        <end position="61"/>
    </location>
    <ligand>
        <name>GTP</name>
        <dbReference type="ChEBI" id="CHEBI:37565"/>
    </ligand>
</feature>
<feature type="binding site" evidence="1">
    <location>
        <position position="59"/>
    </location>
    <ligand>
        <name>Mg(2+)</name>
        <dbReference type="ChEBI" id="CHEBI:18420"/>
    </ligand>
</feature>
<feature type="binding site" evidence="1">
    <location>
        <begin position="75"/>
        <end position="78"/>
    </location>
    <ligand>
        <name>GTP</name>
        <dbReference type="ChEBI" id="CHEBI:37565"/>
    </ligand>
</feature>
<feature type="binding site" evidence="1">
    <location>
        <begin position="142"/>
        <end position="145"/>
    </location>
    <ligand>
        <name>GTP</name>
        <dbReference type="ChEBI" id="CHEBI:37565"/>
    </ligand>
</feature>
<feature type="binding site" evidence="1">
    <location>
        <begin position="174"/>
        <end position="176"/>
    </location>
    <ligand>
        <name>GTP</name>
        <dbReference type="ChEBI" id="CHEBI:37565"/>
    </ligand>
</feature>
<comment type="function">
    <text evidence="1">Necessary for normal cell division and for the maintenance of normal septation.</text>
</comment>
<comment type="cofactor">
    <cofactor evidence="1">
        <name>Mg(2+)</name>
        <dbReference type="ChEBI" id="CHEBI:18420"/>
    </cofactor>
</comment>
<comment type="similarity">
    <text evidence="1">Belongs to the TRAFAC class TrmE-Era-EngA-EngB-Septin-like GTPase superfamily. EngB GTPase family.</text>
</comment>
<proteinExistence type="inferred from homology"/>
<protein>
    <recommendedName>
        <fullName evidence="1">Probable GTP-binding protein EngB</fullName>
    </recommendedName>
</protein>
<sequence>MKVTKADIVISAVKPEQYPDGDLPEIALAGRSNVGKSSFINKILNRKKLVRISSKPGKTQTLNFFLINEMMHFVDVPGYGYAKVSKTERAAWGKMIETYFTTREQLDAAVLVVDLRHKPTNDDVMMYDFLKHYDIPTIIIATKADKIPKGKWQKHLKVVKETLDIESGDEVVLFSSETGLGKEEAWKAIHKFTKTKNA</sequence>
<reference key="1">
    <citation type="journal article" date="2006" name="J. Bacteriol.">
        <title>Pathogenomic sequence analysis of Bacillus cereus and Bacillus thuringiensis isolates closely related to Bacillus anthracis.</title>
        <authorList>
            <person name="Han C.S."/>
            <person name="Xie G."/>
            <person name="Challacombe J.F."/>
            <person name="Altherr M.R."/>
            <person name="Bhotika S.S."/>
            <person name="Bruce D."/>
            <person name="Campbell C.S."/>
            <person name="Campbell M.L."/>
            <person name="Chen J."/>
            <person name="Chertkov O."/>
            <person name="Cleland C."/>
            <person name="Dimitrijevic M."/>
            <person name="Doggett N.A."/>
            <person name="Fawcett J.J."/>
            <person name="Glavina T."/>
            <person name="Goodwin L.A."/>
            <person name="Hill K.K."/>
            <person name="Hitchcock P."/>
            <person name="Jackson P.J."/>
            <person name="Keim P."/>
            <person name="Kewalramani A.R."/>
            <person name="Longmire J."/>
            <person name="Lucas S."/>
            <person name="Malfatti S."/>
            <person name="McMurry K."/>
            <person name="Meincke L.J."/>
            <person name="Misra M."/>
            <person name="Moseman B.L."/>
            <person name="Mundt M."/>
            <person name="Munk A.C."/>
            <person name="Okinaka R.T."/>
            <person name="Parson-Quintana B."/>
            <person name="Reilly L.P."/>
            <person name="Richardson P."/>
            <person name="Robinson D.L."/>
            <person name="Rubin E."/>
            <person name="Saunders E."/>
            <person name="Tapia R."/>
            <person name="Tesmer J.G."/>
            <person name="Thayer N."/>
            <person name="Thompson L.S."/>
            <person name="Tice H."/>
            <person name="Ticknor L.O."/>
            <person name="Wills P.L."/>
            <person name="Brettin T.S."/>
            <person name="Gilna P."/>
        </authorList>
    </citation>
    <scope>NUCLEOTIDE SEQUENCE [LARGE SCALE GENOMIC DNA]</scope>
    <source>
        <strain>97-27</strain>
    </source>
</reference>
<evidence type="ECO:0000255" key="1">
    <source>
        <dbReference type="HAMAP-Rule" id="MF_00321"/>
    </source>
</evidence>
<keyword id="KW-0131">Cell cycle</keyword>
<keyword id="KW-0132">Cell division</keyword>
<keyword id="KW-0342">GTP-binding</keyword>
<keyword id="KW-0460">Magnesium</keyword>
<keyword id="KW-0479">Metal-binding</keyword>
<keyword id="KW-0547">Nucleotide-binding</keyword>
<keyword id="KW-0717">Septation</keyword>
<dbReference type="EMBL" id="AE017355">
    <property type="protein sequence ID" value="AAT62875.1"/>
    <property type="molecule type" value="Genomic_DNA"/>
</dbReference>
<dbReference type="RefSeq" id="YP_038519.1">
    <property type="nucleotide sequence ID" value="NC_005957.1"/>
</dbReference>
<dbReference type="SMR" id="Q6HD57"/>
<dbReference type="KEGG" id="btk:BT9727_4202"/>
<dbReference type="PATRIC" id="fig|281309.8.peg.4480"/>
<dbReference type="HOGENOM" id="CLU_033732_3_0_9"/>
<dbReference type="Proteomes" id="UP000001301">
    <property type="component" value="Chromosome"/>
</dbReference>
<dbReference type="GO" id="GO:0005829">
    <property type="term" value="C:cytosol"/>
    <property type="evidence" value="ECO:0007669"/>
    <property type="project" value="TreeGrafter"/>
</dbReference>
<dbReference type="GO" id="GO:0005525">
    <property type="term" value="F:GTP binding"/>
    <property type="evidence" value="ECO:0007669"/>
    <property type="project" value="UniProtKB-UniRule"/>
</dbReference>
<dbReference type="GO" id="GO:0046872">
    <property type="term" value="F:metal ion binding"/>
    <property type="evidence" value="ECO:0007669"/>
    <property type="project" value="UniProtKB-KW"/>
</dbReference>
<dbReference type="GO" id="GO:0000917">
    <property type="term" value="P:division septum assembly"/>
    <property type="evidence" value="ECO:0007669"/>
    <property type="project" value="UniProtKB-KW"/>
</dbReference>
<dbReference type="CDD" id="cd01876">
    <property type="entry name" value="YihA_EngB"/>
    <property type="match status" value="1"/>
</dbReference>
<dbReference type="FunFam" id="3.40.50.300:FF:000098">
    <property type="entry name" value="Probable GTP-binding protein EngB"/>
    <property type="match status" value="1"/>
</dbReference>
<dbReference type="Gene3D" id="3.40.50.300">
    <property type="entry name" value="P-loop containing nucleotide triphosphate hydrolases"/>
    <property type="match status" value="1"/>
</dbReference>
<dbReference type="HAMAP" id="MF_00321">
    <property type="entry name" value="GTPase_EngB"/>
    <property type="match status" value="1"/>
</dbReference>
<dbReference type="InterPro" id="IPR030393">
    <property type="entry name" value="G_ENGB_dom"/>
</dbReference>
<dbReference type="InterPro" id="IPR006073">
    <property type="entry name" value="GTP-bd"/>
</dbReference>
<dbReference type="InterPro" id="IPR019987">
    <property type="entry name" value="GTP-bd_ribosome_bio_YsxC"/>
</dbReference>
<dbReference type="InterPro" id="IPR027417">
    <property type="entry name" value="P-loop_NTPase"/>
</dbReference>
<dbReference type="InterPro" id="IPR005225">
    <property type="entry name" value="Small_GTP-bd"/>
</dbReference>
<dbReference type="NCBIfam" id="TIGR03598">
    <property type="entry name" value="GTPase_YsxC"/>
    <property type="match status" value="1"/>
</dbReference>
<dbReference type="NCBIfam" id="TIGR00231">
    <property type="entry name" value="small_GTP"/>
    <property type="match status" value="1"/>
</dbReference>
<dbReference type="PANTHER" id="PTHR11649:SF13">
    <property type="entry name" value="ENGB-TYPE G DOMAIN-CONTAINING PROTEIN"/>
    <property type="match status" value="1"/>
</dbReference>
<dbReference type="PANTHER" id="PTHR11649">
    <property type="entry name" value="MSS1/TRME-RELATED GTP-BINDING PROTEIN"/>
    <property type="match status" value="1"/>
</dbReference>
<dbReference type="Pfam" id="PF01926">
    <property type="entry name" value="MMR_HSR1"/>
    <property type="match status" value="1"/>
</dbReference>
<dbReference type="SUPFAM" id="SSF52540">
    <property type="entry name" value="P-loop containing nucleoside triphosphate hydrolases"/>
    <property type="match status" value="1"/>
</dbReference>
<dbReference type="PROSITE" id="PS51706">
    <property type="entry name" value="G_ENGB"/>
    <property type="match status" value="1"/>
</dbReference>
<organism>
    <name type="scientific">Bacillus thuringiensis subsp. konkukian (strain 97-27)</name>
    <dbReference type="NCBI Taxonomy" id="281309"/>
    <lineage>
        <taxon>Bacteria</taxon>
        <taxon>Bacillati</taxon>
        <taxon>Bacillota</taxon>
        <taxon>Bacilli</taxon>
        <taxon>Bacillales</taxon>
        <taxon>Bacillaceae</taxon>
        <taxon>Bacillus</taxon>
        <taxon>Bacillus cereus group</taxon>
    </lineage>
</organism>